<keyword id="KW-0687">Ribonucleoprotein</keyword>
<keyword id="KW-0689">Ribosomal protein</keyword>
<keyword id="KW-0694">RNA-binding</keyword>
<keyword id="KW-0699">rRNA-binding</keyword>
<evidence type="ECO:0000255" key="1">
    <source>
        <dbReference type="HAMAP-Rule" id="MF_01306"/>
    </source>
</evidence>
<evidence type="ECO:0000305" key="2"/>
<proteinExistence type="inferred from homology"/>
<dbReference type="EMBL" id="CP000488">
    <property type="protein sequence ID" value="ABL01981.1"/>
    <property type="molecule type" value="Genomic_DNA"/>
</dbReference>
<dbReference type="RefSeq" id="WP_011737606.1">
    <property type="nucleotide sequence ID" value="NC_008610.1"/>
</dbReference>
<dbReference type="SMR" id="A1AVM4"/>
<dbReference type="STRING" id="413404.Rmag_0189"/>
<dbReference type="KEGG" id="rma:Rmag_0189"/>
<dbReference type="eggNOG" id="COG0522">
    <property type="taxonomic scope" value="Bacteria"/>
</dbReference>
<dbReference type="HOGENOM" id="CLU_092403_0_2_6"/>
<dbReference type="OrthoDB" id="9803672at2"/>
<dbReference type="Proteomes" id="UP000002587">
    <property type="component" value="Chromosome"/>
</dbReference>
<dbReference type="GO" id="GO:0015935">
    <property type="term" value="C:small ribosomal subunit"/>
    <property type="evidence" value="ECO:0007669"/>
    <property type="project" value="InterPro"/>
</dbReference>
<dbReference type="GO" id="GO:0019843">
    <property type="term" value="F:rRNA binding"/>
    <property type="evidence" value="ECO:0007669"/>
    <property type="project" value="UniProtKB-UniRule"/>
</dbReference>
<dbReference type="GO" id="GO:0003735">
    <property type="term" value="F:structural constituent of ribosome"/>
    <property type="evidence" value="ECO:0007669"/>
    <property type="project" value="InterPro"/>
</dbReference>
<dbReference type="GO" id="GO:0042274">
    <property type="term" value="P:ribosomal small subunit biogenesis"/>
    <property type="evidence" value="ECO:0007669"/>
    <property type="project" value="TreeGrafter"/>
</dbReference>
<dbReference type="GO" id="GO:0006412">
    <property type="term" value="P:translation"/>
    <property type="evidence" value="ECO:0007669"/>
    <property type="project" value="UniProtKB-UniRule"/>
</dbReference>
<dbReference type="CDD" id="cd00165">
    <property type="entry name" value="S4"/>
    <property type="match status" value="1"/>
</dbReference>
<dbReference type="FunFam" id="1.10.1050.10:FF:000001">
    <property type="entry name" value="30S ribosomal protein S4"/>
    <property type="match status" value="1"/>
</dbReference>
<dbReference type="FunFam" id="3.10.290.10:FF:000001">
    <property type="entry name" value="30S ribosomal protein S4"/>
    <property type="match status" value="1"/>
</dbReference>
<dbReference type="Gene3D" id="1.10.1050.10">
    <property type="entry name" value="Ribosomal Protein S4 Delta 41, Chain A, domain 1"/>
    <property type="match status" value="1"/>
</dbReference>
<dbReference type="Gene3D" id="3.10.290.10">
    <property type="entry name" value="RNA-binding S4 domain"/>
    <property type="match status" value="1"/>
</dbReference>
<dbReference type="HAMAP" id="MF_01306_B">
    <property type="entry name" value="Ribosomal_uS4_B"/>
    <property type="match status" value="1"/>
</dbReference>
<dbReference type="InterPro" id="IPR022801">
    <property type="entry name" value="Ribosomal_uS4"/>
</dbReference>
<dbReference type="InterPro" id="IPR005709">
    <property type="entry name" value="Ribosomal_uS4_bac-type"/>
</dbReference>
<dbReference type="InterPro" id="IPR018079">
    <property type="entry name" value="Ribosomal_uS4_CS"/>
</dbReference>
<dbReference type="InterPro" id="IPR001912">
    <property type="entry name" value="Ribosomal_uS4_N"/>
</dbReference>
<dbReference type="InterPro" id="IPR002942">
    <property type="entry name" value="S4_RNA-bd"/>
</dbReference>
<dbReference type="InterPro" id="IPR036986">
    <property type="entry name" value="S4_RNA-bd_sf"/>
</dbReference>
<dbReference type="NCBIfam" id="NF003717">
    <property type="entry name" value="PRK05327.1"/>
    <property type="match status" value="1"/>
</dbReference>
<dbReference type="NCBIfam" id="TIGR01017">
    <property type="entry name" value="rpsD_bact"/>
    <property type="match status" value="1"/>
</dbReference>
<dbReference type="PANTHER" id="PTHR11831">
    <property type="entry name" value="30S 40S RIBOSOMAL PROTEIN"/>
    <property type="match status" value="1"/>
</dbReference>
<dbReference type="PANTHER" id="PTHR11831:SF4">
    <property type="entry name" value="SMALL RIBOSOMAL SUBUNIT PROTEIN US4M"/>
    <property type="match status" value="1"/>
</dbReference>
<dbReference type="Pfam" id="PF00163">
    <property type="entry name" value="Ribosomal_S4"/>
    <property type="match status" value="1"/>
</dbReference>
<dbReference type="Pfam" id="PF01479">
    <property type="entry name" value="S4"/>
    <property type="match status" value="1"/>
</dbReference>
<dbReference type="SMART" id="SM01390">
    <property type="entry name" value="Ribosomal_S4"/>
    <property type="match status" value="1"/>
</dbReference>
<dbReference type="SMART" id="SM00363">
    <property type="entry name" value="S4"/>
    <property type="match status" value="1"/>
</dbReference>
<dbReference type="SUPFAM" id="SSF55174">
    <property type="entry name" value="Alpha-L RNA-binding motif"/>
    <property type="match status" value="1"/>
</dbReference>
<dbReference type="PROSITE" id="PS00632">
    <property type="entry name" value="RIBOSOMAL_S4"/>
    <property type="match status" value="1"/>
</dbReference>
<dbReference type="PROSITE" id="PS50889">
    <property type="entry name" value="S4"/>
    <property type="match status" value="1"/>
</dbReference>
<feature type="chain" id="PRO_0000293358" description="Small ribosomal subunit protein uS4">
    <location>
        <begin position="1"/>
        <end position="208"/>
    </location>
</feature>
<feature type="domain" description="S4 RNA-binding" evidence="1">
    <location>
        <begin position="98"/>
        <end position="160"/>
    </location>
</feature>
<sequence length="208" mass="23696">MARYTGPTCKLARREGTDLFLKSGIRSLDSKCNVTQLPGMHGANARRQKGTEYGLQLREKQKVRRIYGILEKQFRLYYKKASQKKGSTGENLLSLLECRLDNVVYRMGFGSTRAEARQLVSHKSILMNGLVVNIPSYQVSVNDEISIREKAKKQSRIQLALELAEQSTQPQWLDIDHKALKGVFKNVPARDELSSDIQEHLIVELYSK</sequence>
<gene>
    <name evidence="1" type="primary">rpsD</name>
    <name type="ordered locus">Rmag_0189</name>
</gene>
<name>RS4_RUTMC</name>
<reference key="1">
    <citation type="journal article" date="2007" name="Science">
        <title>The Calyptogena magnifica chemoautotrophic symbiont genome.</title>
        <authorList>
            <person name="Newton I.L.G."/>
            <person name="Woyke T."/>
            <person name="Auchtung T.A."/>
            <person name="Dilly G.F."/>
            <person name="Dutton R.J."/>
            <person name="Fisher M.C."/>
            <person name="Fontanez K.M."/>
            <person name="Lau E."/>
            <person name="Stewart F.J."/>
            <person name="Richardson P.M."/>
            <person name="Barry K.W."/>
            <person name="Saunders E."/>
            <person name="Detter J.C."/>
            <person name="Wu D."/>
            <person name="Eisen J.A."/>
            <person name="Cavanaugh C.M."/>
        </authorList>
    </citation>
    <scope>NUCLEOTIDE SEQUENCE [LARGE SCALE GENOMIC DNA]</scope>
</reference>
<organism>
    <name type="scientific">Ruthia magnifica subsp. Calyptogena magnifica</name>
    <dbReference type="NCBI Taxonomy" id="413404"/>
    <lineage>
        <taxon>Bacteria</taxon>
        <taxon>Pseudomonadati</taxon>
        <taxon>Pseudomonadota</taxon>
        <taxon>Gammaproteobacteria</taxon>
        <taxon>Candidatus Pseudothioglobaceae</taxon>
        <taxon>Candidatus Ruthturnera</taxon>
    </lineage>
</organism>
<comment type="function">
    <text evidence="1">One of the primary rRNA binding proteins, it binds directly to 16S rRNA where it nucleates assembly of the body of the 30S subunit.</text>
</comment>
<comment type="function">
    <text evidence="1">With S5 and S12 plays an important role in translational accuracy.</text>
</comment>
<comment type="subunit">
    <text evidence="1">Part of the 30S ribosomal subunit. Contacts protein S5. The interaction surface between S4 and S5 is involved in control of translational fidelity.</text>
</comment>
<comment type="similarity">
    <text evidence="1">Belongs to the universal ribosomal protein uS4 family.</text>
</comment>
<accession>A1AVM4</accession>
<protein>
    <recommendedName>
        <fullName evidence="1">Small ribosomal subunit protein uS4</fullName>
    </recommendedName>
    <alternativeName>
        <fullName evidence="2">30S ribosomal protein S4</fullName>
    </alternativeName>
</protein>